<accession>Q980M5</accession>
<name>TFE_SACS2</name>
<keyword id="KW-0002">3D-structure</keyword>
<keyword id="KW-0238">DNA-binding</keyword>
<keyword id="KW-1185">Reference proteome</keyword>
<keyword id="KW-0804">Transcription</keyword>
<keyword id="KW-0805">Transcription regulation</keyword>
<comment type="function">
    <text evidence="2">Transcription factor that plays a role in the activation of archaeal genes transcribed by RNA polymerase. Facilitates transcription initiation by enhancing TATA-box recognition by TATA-box-binding protein (Tbp), and transcription factor B (Tfb) and RNA polymerase recruitment. Not absolutely required for transcription in vitro, but particularly important in cases where Tbp or Tfb function is not optimal. It dynamically alters the nucleic acid-binding properties of RNA polymerases by stabilizing the initiation complex and destabilizing elongation complexes. Seems to translocate with the RNA polymerase following initiation and acts by binding to the non template strand of the transcription bubble in elongation complexes.</text>
</comment>
<comment type="subunit">
    <text evidence="1 3">Monomer (Probable). Interaction with RNA polymerase subunits RpoF and RpoE is necessary for Tfe stimulatory transcription activity. Able to interact with Tbp and RNA polymerase in the absence of DNA promoter. Interacts both with the preinitiation and elongation complexes (By similarity).</text>
</comment>
<comment type="domain">
    <text evidence="1">The winged helix domain is involved in binding to DNA in the preinitiation complex.</text>
</comment>
<comment type="similarity">
    <text evidence="3">Belongs to the TFE family.</text>
</comment>
<sequence length="178" mass="21173">MVNAEDLFINLAKSLLGDDVIDVLRILLDKGTEMTDEEIANQLNIKVNDVRKKLNLLEEQGFVSYRKTRDKDSGWFIYYWKPNIDQINEILLNRKRLILDKLKTRLEYEKNNTFFICPQDNSRYSFEEAFENEFKCLKCGSQLTYYDTDKIKSFLEQKIRQIEEEIDKETKLGANKNH</sequence>
<protein>
    <recommendedName>
        <fullName>Transcription factor E</fullName>
        <shortName>TFE</shortName>
    </recommendedName>
    <alternativeName>
        <fullName>TFIIE subunit alpha homolog</fullName>
    </alternativeName>
    <alternativeName>
        <fullName>Transcription initiation factor TFIIE</fullName>
    </alternativeName>
</protein>
<feature type="chain" id="PRO_0000318948" description="Transcription factor E">
    <location>
        <begin position="1"/>
        <end position="178"/>
    </location>
</feature>
<feature type="domain" description="HTH TFE/IIEalpha-type">
    <location>
        <begin position="4"/>
        <end position="88"/>
    </location>
</feature>
<feature type="turn" evidence="4">
    <location>
        <begin position="3"/>
        <end position="6"/>
    </location>
</feature>
<feature type="helix" evidence="4">
    <location>
        <begin position="7"/>
        <end position="13"/>
    </location>
</feature>
<feature type="helix" evidence="4">
    <location>
        <begin position="21"/>
        <end position="30"/>
    </location>
</feature>
<feature type="helix" evidence="4">
    <location>
        <begin position="36"/>
        <end position="41"/>
    </location>
</feature>
<feature type="helix" evidence="4">
    <location>
        <begin position="47"/>
        <end position="60"/>
    </location>
</feature>
<feature type="strand" evidence="4">
    <location>
        <begin position="64"/>
        <end position="68"/>
    </location>
</feature>
<feature type="strand" evidence="4">
    <location>
        <begin position="77"/>
        <end position="81"/>
    </location>
</feature>
<feature type="helix" evidence="4">
    <location>
        <begin position="84"/>
        <end position="87"/>
    </location>
</feature>
<gene>
    <name type="primary">tfe</name>
    <name type="ordered locus">SSO0266</name>
</gene>
<evidence type="ECO:0000250" key="1"/>
<evidence type="ECO:0000269" key="2">
    <source>
    </source>
</evidence>
<evidence type="ECO:0000305" key="3"/>
<evidence type="ECO:0007829" key="4">
    <source>
        <dbReference type="PDB" id="1Q1H"/>
    </source>
</evidence>
<organism>
    <name type="scientific">Saccharolobus solfataricus (strain ATCC 35092 / DSM 1617 / JCM 11322 / P2)</name>
    <name type="common">Sulfolobus solfataricus</name>
    <dbReference type="NCBI Taxonomy" id="273057"/>
    <lineage>
        <taxon>Archaea</taxon>
        <taxon>Thermoproteota</taxon>
        <taxon>Thermoprotei</taxon>
        <taxon>Sulfolobales</taxon>
        <taxon>Sulfolobaceae</taxon>
        <taxon>Saccharolobus</taxon>
    </lineage>
</organism>
<dbReference type="EMBL" id="AE006641">
    <property type="protein sequence ID" value="AAK40605.1"/>
    <property type="molecule type" value="Genomic_DNA"/>
</dbReference>
<dbReference type="PIR" id="F90168">
    <property type="entry name" value="F90168"/>
</dbReference>
<dbReference type="RefSeq" id="WP_009990539.1">
    <property type="nucleotide sequence ID" value="NC_002754.1"/>
</dbReference>
<dbReference type="PDB" id="1Q1H">
    <property type="method" value="X-ray"/>
    <property type="resolution" value="2.90 A"/>
    <property type="chains" value="A=1-110"/>
</dbReference>
<dbReference type="PDBsum" id="1Q1H"/>
<dbReference type="SMR" id="Q980M5"/>
<dbReference type="STRING" id="273057.SSO0266"/>
<dbReference type="PaxDb" id="273057-SSO0266"/>
<dbReference type="EnsemblBacteria" id="AAK40605">
    <property type="protein sequence ID" value="AAK40605"/>
    <property type="gene ID" value="SSO0266"/>
</dbReference>
<dbReference type="GeneID" id="44129239"/>
<dbReference type="KEGG" id="sso:SSO0266"/>
<dbReference type="PATRIC" id="fig|273057.12.peg.261"/>
<dbReference type="eggNOG" id="arCOG04270">
    <property type="taxonomic scope" value="Archaea"/>
</dbReference>
<dbReference type="HOGENOM" id="CLU_100097_0_0_2"/>
<dbReference type="InParanoid" id="Q980M5"/>
<dbReference type="PhylomeDB" id="Q980M5"/>
<dbReference type="EvolutionaryTrace" id="Q980M5"/>
<dbReference type="Proteomes" id="UP000001974">
    <property type="component" value="Chromosome"/>
</dbReference>
<dbReference type="GO" id="GO:0003677">
    <property type="term" value="F:DNA binding"/>
    <property type="evidence" value="ECO:0007669"/>
    <property type="project" value="UniProtKB-KW"/>
</dbReference>
<dbReference type="GO" id="GO:0006355">
    <property type="term" value="P:regulation of DNA-templated transcription"/>
    <property type="evidence" value="ECO:0007669"/>
    <property type="project" value="InterPro"/>
</dbReference>
<dbReference type="GO" id="GO:0006367">
    <property type="term" value="P:transcription initiation at RNA polymerase II promoter"/>
    <property type="evidence" value="ECO:0007669"/>
    <property type="project" value="InterPro"/>
</dbReference>
<dbReference type="Gene3D" id="1.10.10.10">
    <property type="entry name" value="Winged helix-like DNA-binding domain superfamily/Winged helix DNA-binding domain"/>
    <property type="match status" value="1"/>
</dbReference>
<dbReference type="HAMAP" id="MF_01909">
    <property type="entry name" value="TFE_arch"/>
    <property type="match status" value="1"/>
</dbReference>
<dbReference type="InterPro" id="IPR016481">
    <property type="entry name" value="TF_E_archaea"/>
</dbReference>
<dbReference type="InterPro" id="IPR039997">
    <property type="entry name" value="TFE"/>
</dbReference>
<dbReference type="InterPro" id="IPR017919">
    <property type="entry name" value="TFIIE/TFIIEa_HTH"/>
</dbReference>
<dbReference type="InterPro" id="IPR002853">
    <property type="entry name" value="TFIIE_asu"/>
</dbReference>
<dbReference type="InterPro" id="IPR024550">
    <property type="entry name" value="TFIIEa/SarR/Rpc3_HTH_dom"/>
</dbReference>
<dbReference type="InterPro" id="IPR036388">
    <property type="entry name" value="WH-like_DNA-bd_sf"/>
</dbReference>
<dbReference type="InterPro" id="IPR036390">
    <property type="entry name" value="WH_DNA-bd_sf"/>
</dbReference>
<dbReference type="PANTHER" id="PTHR13097:SF7">
    <property type="entry name" value="GENERAL TRANSCRIPTION FACTOR IIE SUBUNIT 1"/>
    <property type="match status" value="1"/>
</dbReference>
<dbReference type="PANTHER" id="PTHR13097">
    <property type="entry name" value="TRANSCRIPTION INITIATION FACTOR IIE, ALPHA SUBUNIT"/>
    <property type="match status" value="1"/>
</dbReference>
<dbReference type="Pfam" id="PF02002">
    <property type="entry name" value="TFIIE_alpha"/>
    <property type="match status" value="1"/>
</dbReference>
<dbReference type="PIRSF" id="PIRSF006373">
    <property type="entry name" value="TF_E_archaea"/>
    <property type="match status" value="1"/>
</dbReference>
<dbReference type="SMART" id="SM00531">
    <property type="entry name" value="TFIIE"/>
    <property type="match status" value="1"/>
</dbReference>
<dbReference type="SUPFAM" id="SSF46785">
    <property type="entry name" value="Winged helix' DNA-binding domain"/>
    <property type="match status" value="1"/>
</dbReference>
<dbReference type="PROSITE" id="PS51344">
    <property type="entry name" value="HTH_TFE_IIE"/>
    <property type="match status" value="1"/>
</dbReference>
<proteinExistence type="evidence at protein level"/>
<reference key="1">
    <citation type="journal article" date="2001" name="Proc. Natl. Acad. Sci. U.S.A.">
        <title>The complete genome of the crenarchaeon Sulfolobus solfataricus P2.</title>
        <authorList>
            <person name="She Q."/>
            <person name="Singh R.K."/>
            <person name="Confalonieri F."/>
            <person name="Zivanovic Y."/>
            <person name="Allard G."/>
            <person name="Awayez M.J."/>
            <person name="Chan-Weiher C.C.-Y."/>
            <person name="Clausen I.G."/>
            <person name="Curtis B.A."/>
            <person name="De Moors A."/>
            <person name="Erauso G."/>
            <person name="Fletcher C."/>
            <person name="Gordon P.M.K."/>
            <person name="Heikamp-de Jong I."/>
            <person name="Jeffries A.C."/>
            <person name="Kozera C.J."/>
            <person name="Medina N."/>
            <person name="Peng X."/>
            <person name="Thi-Ngoc H.P."/>
            <person name="Redder P."/>
            <person name="Schenk M.E."/>
            <person name="Theriault C."/>
            <person name="Tolstrup N."/>
            <person name="Charlebois R.L."/>
            <person name="Doolittle W.F."/>
            <person name="Duguet M."/>
            <person name="Gaasterland T."/>
            <person name="Garrett R.A."/>
            <person name="Ragan M.A."/>
            <person name="Sensen C.W."/>
            <person name="Van der Oost J."/>
        </authorList>
    </citation>
    <scope>NUCLEOTIDE SEQUENCE [LARGE SCALE GENOMIC DNA]</scope>
    <source>
        <strain>ATCC 35092 / DSM 1617 / JCM 11322 / P2</strain>
    </source>
</reference>
<reference key="2">
    <citation type="journal article" date="2001" name="EMBO Rep.">
        <title>The archaeal TFIIEalpha homologue facilitates transcription initiation by enhancing TATA-box recognition.</title>
        <authorList>
            <person name="Bell S.D."/>
            <person name="Brinkman A.B."/>
            <person name="van der Oost J."/>
            <person name="Jackson S.P."/>
        </authorList>
    </citation>
    <scope>FUNCTION</scope>
    <scope>INTERACTION WITH TBP AND RNA POLYMERASE</scope>
</reference>
<reference key="3">
    <citation type="journal article" date="2003" name="J. Biol. Chem.">
        <title>An extended winged helix domain in general transcription factor E/IIE alpha.</title>
        <authorList>
            <person name="Meinhart A."/>
            <person name="Blobel J."/>
            <person name="Cramer P."/>
        </authorList>
    </citation>
    <scope>X-RAY CRYSTALLOGRAPHY (2.9 ANGSTROMS) OF 1-110</scope>
    <scope>DOMAIN</scope>
</reference>